<sequence>MSIASVASVFKGEHAVGSKVTVRGWVRTRRDSKAGISFLAVYDGSCFNPIQGVVPNSLDNYDNEVLKLTAGCSVVMTGDVVESPGAGQAFELQVTELEVAGWVDDPDTYPMAAKRHSIEHLRELAHLRPRTNIIGAVARVRNCLSQAIHRFYHEEGFIWVSTPLITASDCEGAGEMFRVSTLDMENLPRTDAGKVDYDKDFFGKEAFLTVSGQLNAETYACALSKVYTFGPTFRAENSNTSRHLAEFWMVEPEVAFANLNDIAGLAEAMLKYAFNAVLTERMDDLTFFAQHVDKTVIDRLQSFVSSDFAQVDYTDAVEILQNCGRTFEFPVSWGIDLSSEHERYLAEEHFKAPVVVKNYPKDIKAFYMRLNDDGKTVAAMDVLAPGIGEIIGGSQREERLDVLDMRLAEMDLNQEDYWWYRDMRRYGTVPHAGFGLGFERLVSYVTGVNNIRDVIPFPRAPRTANF</sequence>
<proteinExistence type="inferred from homology"/>
<evidence type="ECO:0000255" key="1">
    <source>
        <dbReference type="HAMAP-Rule" id="MF_00534"/>
    </source>
</evidence>
<name>SYN_SHEB9</name>
<gene>
    <name evidence="1" type="primary">asnS</name>
    <name type="ordered locus">Sbal195_1947</name>
</gene>
<protein>
    <recommendedName>
        <fullName evidence="1">Asparagine--tRNA ligase</fullName>
        <ecNumber evidence="1">6.1.1.22</ecNumber>
    </recommendedName>
    <alternativeName>
        <fullName evidence="1">Asparaginyl-tRNA synthetase</fullName>
        <shortName evidence="1">AsnRS</shortName>
    </alternativeName>
</protein>
<reference key="1">
    <citation type="submission" date="2007-11" db="EMBL/GenBank/DDBJ databases">
        <title>Complete sequence of chromosome of Shewanella baltica OS195.</title>
        <authorList>
            <consortium name="US DOE Joint Genome Institute"/>
            <person name="Copeland A."/>
            <person name="Lucas S."/>
            <person name="Lapidus A."/>
            <person name="Barry K."/>
            <person name="Glavina del Rio T."/>
            <person name="Dalin E."/>
            <person name="Tice H."/>
            <person name="Pitluck S."/>
            <person name="Chain P."/>
            <person name="Malfatti S."/>
            <person name="Shin M."/>
            <person name="Vergez L."/>
            <person name="Schmutz J."/>
            <person name="Larimer F."/>
            <person name="Land M."/>
            <person name="Hauser L."/>
            <person name="Kyrpides N."/>
            <person name="Kim E."/>
            <person name="Brettar I."/>
            <person name="Rodrigues J."/>
            <person name="Konstantinidis K."/>
            <person name="Klappenbach J."/>
            <person name="Hofle M."/>
            <person name="Tiedje J."/>
            <person name="Richardson P."/>
        </authorList>
    </citation>
    <scope>NUCLEOTIDE SEQUENCE [LARGE SCALE GENOMIC DNA]</scope>
    <source>
        <strain>OS195</strain>
    </source>
</reference>
<feature type="chain" id="PRO_1000081854" description="Asparagine--tRNA ligase">
    <location>
        <begin position="1"/>
        <end position="466"/>
    </location>
</feature>
<keyword id="KW-0030">Aminoacyl-tRNA synthetase</keyword>
<keyword id="KW-0067">ATP-binding</keyword>
<keyword id="KW-0963">Cytoplasm</keyword>
<keyword id="KW-0436">Ligase</keyword>
<keyword id="KW-0547">Nucleotide-binding</keyword>
<keyword id="KW-0648">Protein biosynthesis</keyword>
<comment type="catalytic activity">
    <reaction evidence="1">
        <text>tRNA(Asn) + L-asparagine + ATP = L-asparaginyl-tRNA(Asn) + AMP + diphosphate + H(+)</text>
        <dbReference type="Rhea" id="RHEA:11180"/>
        <dbReference type="Rhea" id="RHEA-COMP:9659"/>
        <dbReference type="Rhea" id="RHEA-COMP:9674"/>
        <dbReference type="ChEBI" id="CHEBI:15378"/>
        <dbReference type="ChEBI" id="CHEBI:30616"/>
        <dbReference type="ChEBI" id="CHEBI:33019"/>
        <dbReference type="ChEBI" id="CHEBI:58048"/>
        <dbReference type="ChEBI" id="CHEBI:78442"/>
        <dbReference type="ChEBI" id="CHEBI:78515"/>
        <dbReference type="ChEBI" id="CHEBI:456215"/>
        <dbReference type="EC" id="6.1.1.22"/>
    </reaction>
</comment>
<comment type="subunit">
    <text evidence="1">Homodimer.</text>
</comment>
<comment type="subcellular location">
    <subcellularLocation>
        <location evidence="1">Cytoplasm</location>
    </subcellularLocation>
</comment>
<comment type="similarity">
    <text evidence="1">Belongs to the class-II aminoacyl-tRNA synthetase family.</text>
</comment>
<dbReference type="EC" id="6.1.1.22" evidence="1"/>
<dbReference type="EMBL" id="CP000891">
    <property type="protein sequence ID" value="ABX49118.1"/>
    <property type="molecule type" value="Genomic_DNA"/>
</dbReference>
<dbReference type="RefSeq" id="WP_006086433.1">
    <property type="nucleotide sequence ID" value="NC_009997.1"/>
</dbReference>
<dbReference type="SMR" id="A9KZ30"/>
<dbReference type="GeneID" id="11772145"/>
<dbReference type="KEGG" id="sbn:Sbal195_1947"/>
<dbReference type="HOGENOM" id="CLU_004553_2_0_6"/>
<dbReference type="Proteomes" id="UP000000770">
    <property type="component" value="Chromosome"/>
</dbReference>
<dbReference type="GO" id="GO:0005737">
    <property type="term" value="C:cytoplasm"/>
    <property type="evidence" value="ECO:0007669"/>
    <property type="project" value="UniProtKB-SubCell"/>
</dbReference>
<dbReference type="GO" id="GO:0004816">
    <property type="term" value="F:asparagine-tRNA ligase activity"/>
    <property type="evidence" value="ECO:0007669"/>
    <property type="project" value="UniProtKB-UniRule"/>
</dbReference>
<dbReference type="GO" id="GO:0005524">
    <property type="term" value="F:ATP binding"/>
    <property type="evidence" value="ECO:0007669"/>
    <property type="project" value="UniProtKB-UniRule"/>
</dbReference>
<dbReference type="GO" id="GO:0003676">
    <property type="term" value="F:nucleic acid binding"/>
    <property type="evidence" value="ECO:0007669"/>
    <property type="project" value="InterPro"/>
</dbReference>
<dbReference type="GO" id="GO:0006421">
    <property type="term" value="P:asparaginyl-tRNA aminoacylation"/>
    <property type="evidence" value="ECO:0007669"/>
    <property type="project" value="UniProtKB-UniRule"/>
</dbReference>
<dbReference type="CDD" id="cd00776">
    <property type="entry name" value="AsxRS_core"/>
    <property type="match status" value="1"/>
</dbReference>
<dbReference type="CDD" id="cd04318">
    <property type="entry name" value="EcAsnRS_like_N"/>
    <property type="match status" value="1"/>
</dbReference>
<dbReference type="FunFam" id="3.30.930.10:FF:000016">
    <property type="entry name" value="Asparagine--tRNA ligase"/>
    <property type="match status" value="1"/>
</dbReference>
<dbReference type="Gene3D" id="3.30.930.10">
    <property type="entry name" value="Bira Bifunctional Protein, Domain 2"/>
    <property type="match status" value="1"/>
</dbReference>
<dbReference type="Gene3D" id="2.40.50.140">
    <property type="entry name" value="Nucleic acid-binding proteins"/>
    <property type="match status" value="1"/>
</dbReference>
<dbReference type="HAMAP" id="MF_00534">
    <property type="entry name" value="Asn_tRNA_synth"/>
    <property type="match status" value="1"/>
</dbReference>
<dbReference type="InterPro" id="IPR004364">
    <property type="entry name" value="Aa-tRNA-synt_II"/>
</dbReference>
<dbReference type="InterPro" id="IPR006195">
    <property type="entry name" value="aa-tRNA-synth_II"/>
</dbReference>
<dbReference type="InterPro" id="IPR045864">
    <property type="entry name" value="aa-tRNA-synth_II/BPL/LPL"/>
</dbReference>
<dbReference type="InterPro" id="IPR004522">
    <property type="entry name" value="Asn-tRNA-ligase"/>
</dbReference>
<dbReference type="InterPro" id="IPR002312">
    <property type="entry name" value="Asp/Asn-tRNA-synth_IIb"/>
</dbReference>
<dbReference type="InterPro" id="IPR012340">
    <property type="entry name" value="NA-bd_OB-fold"/>
</dbReference>
<dbReference type="InterPro" id="IPR004365">
    <property type="entry name" value="NA-bd_OB_tRNA"/>
</dbReference>
<dbReference type="NCBIfam" id="TIGR00457">
    <property type="entry name" value="asnS"/>
    <property type="match status" value="1"/>
</dbReference>
<dbReference type="NCBIfam" id="NF003037">
    <property type="entry name" value="PRK03932.1"/>
    <property type="match status" value="1"/>
</dbReference>
<dbReference type="PANTHER" id="PTHR22594:SF34">
    <property type="entry name" value="ASPARAGINE--TRNA LIGASE, MITOCHONDRIAL-RELATED"/>
    <property type="match status" value="1"/>
</dbReference>
<dbReference type="PANTHER" id="PTHR22594">
    <property type="entry name" value="ASPARTYL/LYSYL-TRNA SYNTHETASE"/>
    <property type="match status" value="1"/>
</dbReference>
<dbReference type="Pfam" id="PF00152">
    <property type="entry name" value="tRNA-synt_2"/>
    <property type="match status" value="1"/>
</dbReference>
<dbReference type="Pfam" id="PF01336">
    <property type="entry name" value="tRNA_anti-codon"/>
    <property type="match status" value="1"/>
</dbReference>
<dbReference type="PRINTS" id="PR01042">
    <property type="entry name" value="TRNASYNTHASP"/>
</dbReference>
<dbReference type="SUPFAM" id="SSF55681">
    <property type="entry name" value="Class II aaRS and biotin synthetases"/>
    <property type="match status" value="1"/>
</dbReference>
<dbReference type="SUPFAM" id="SSF50249">
    <property type="entry name" value="Nucleic acid-binding proteins"/>
    <property type="match status" value="1"/>
</dbReference>
<dbReference type="PROSITE" id="PS50862">
    <property type="entry name" value="AA_TRNA_LIGASE_II"/>
    <property type="match status" value="1"/>
</dbReference>
<organism>
    <name type="scientific">Shewanella baltica (strain OS195)</name>
    <dbReference type="NCBI Taxonomy" id="399599"/>
    <lineage>
        <taxon>Bacteria</taxon>
        <taxon>Pseudomonadati</taxon>
        <taxon>Pseudomonadota</taxon>
        <taxon>Gammaproteobacteria</taxon>
        <taxon>Alteromonadales</taxon>
        <taxon>Shewanellaceae</taxon>
        <taxon>Shewanella</taxon>
    </lineage>
</organism>
<accession>A9KZ30</accession>